<organism>
    <name type="scientific">Aethionema grandiflorum</name>
    <name type="common">Persian stone-cress</name>
    <dbReference type="NCBI Taxonomy" id="72657"/>
    <lineage>
        <taxon>Eukaryota</taxon>
        <taxon>Viridiplantae</taxon>
        <taxon>Streptophyta</taxon>
        <taxon>Embryophyta</taxon>
        <taxon>Tracheophyta</taxon>
        <taxon>Spermatophyta</taxon>
        <taxon>Magnoliopsida</taxon>
        <taxon>eudicotyledons</taxon>
        <taxon>Gunneridae</taxon>
        <taxon>Pentapetalae</taxon>
        <taxon>rosids</taxon>
        <taxon>malvids</taxon>
        <taxon>Brassicales</taxon>
        <taxon>Brassicaceae</taxon>
        <taxon>Aethionemeae</taxon>
        <taxon>Aethionema</taxon>
    </lineage>
</organism>
<comment type="function">
    <text evidence="1">NDH shuttles electrons from NAD(P)H:plastoquinone, via FMN and iron-sulfur (Fe-S) centers, to quinones in the photosynthetic chain and possibly in a chloroplast respiratory chain. The immediate electron acceptor for the enzyme in this species is believed to be plastoquinone. Couples the redox reaction to proton translocation, and thus conserves the redox energy in a proton gradient.</text>
</comment>
<comment type="catalytic activity">
    <reaction evidence="1">
        <text>a plastoquinone + NADH + (n+1) H(+)(in) = a plastoquinol + NAD(+) + n H(+)(out)</text>
        <dbReference type="Rhea" id="RHEA:42608"/>
        <dbReference type="Rhea" id="RHEA-COMP:9561"/>
        <dbReference type="Rhea" id="RHEA-COMP:9562"/>
        <dbReference type="ChEBI" id="CHEBI:15378"/>
        <dbReference type="ChEBI" id="CHEBI:17757"/>
        <dbReference type="ChEBI" id="CHEBI:57540"/>
        <dbReference type="ChEBI" id="CHEBI:57945"/>
        <dbReference type="ChEBI" id="CHEBI:62192"/>
    </reaction>
</comment>
<comment type="catalytic activity">
    <reaction evidence="1">
        <text>a plastoquinone + NADPH + (n+1) H(+)(in) = a plastoquinol + NADP(+) + n H(+)(out)</text>
        <dbReference type="Rhea" id="RHEA:42612"/>
        <dbReference type="Rhea" id="RHEA-COMP:9561"/>
        <dbReference type="Rhea" id="RHEA-COMP:9562"/>
        <dbReference type="ChEBI" id="CHEBI:15378"/>
        <dbReference type="ChEBI" id="CHEBI:17757"/>
        <dbReference type="ChEBI" id="CHEBI:57783"/>
        <dbReference type="ChEBI" id="CHEBI:58349"/>
        <dbReference type="ChEBI" id="CHEBI:62192"/>
    </reaction>
</comment>
<comment type="cofactor">
    <cofactor evidence="1">
        <name>[4Fe-4S] cluster</name>
        <dbReference type="ChEBI" id="CHEBI:49883"/>
    </cofactor>
    <text evidence="1">Binds 1 [4Fe-4S] cluster.</text>
</comment>
<comment type="subunit">
    <text evidence="1">NDH is composed of at least 16 different subunits, 5 of which are encoded in the nucleus.</text>
</comment>
<comment type="subcellular location">
    <subcellularLocation>
        <location evidence="1">Plastid</location>
        <location evidence="1">Chloroplast thylakoid membrane</location>
        <topology evidence="1">Peripheral membrane protein</topology>
        <orientation evidence="1">Stromal side</orientation>
    </subcellularLocation>
</comment>
<comment type="similarity">
    <text evidence="1">Belongs to the complex I 20 kDa subunit family.</text>
</comment>
<reference key="1">
    <citation type="submission" date="2007-03" db="EMBL/GenBank/DDBJ databases">
        <title>Sequencing analysis of Aethionema grandiflorum chloroplast DNA.</title>
        <authorList>
            <person name="Hosouchi T."/>
            <person name="Tsuruoka H."/>
            <person name="Kotani H."/>
        </authorList>
    </citation>
    <scope>NUCLEOTIDE SEQUENCE [LARGE SCALE GENOMIC DNA]</scope>
</reference>
<keyword id="KW-0004">4Fe-4S</keyword>
<keyword id="KW-0150">Chloroplast</keyword>
<keyword id="KW-0408">Iron</keyword>
<keyword id="KW-0411">Iron-sulfur</keyword>
<keyword id="KW-0472">Membrane</keyword>
<keyword id="KW-0479">Metal-binding</keyword>
<keyword id="KW-0520">NAD</keyword>
<keyword id="KW-0521">NADP</keyword>
<keyword id="KW-0934">Plastid</keyword>
<keyword id="KW-0618">Plastoquinone</keyword>
<keyword id="KW-0874">Quinone</keyword>
<keyword id="KW-0793">Thylakoid</keyword>
<keyword id="KW-1278">Translocase</keyword>
<keyword id="KW-0813">Transport</keyword>
<accession>A4QJK3</accession>
<dbReference type="EC" id="7.1.1.-" evidence="1"/>
<dbReference type="EMBL" id="AP009367">
    <property type="protein sequence ID" value="BAF49858.1"/>
    <property type="molecule type" value="Genomic_DNA"/>
</dbReference>
<dbReference type="RefSeq" id="YP_001123034.1">
    <property type="nucleotide sequence ID" value="NC_009266.1"/>
</dbReference>
<dbReference type="SMR" id="A4QJK3"/>
<dbReference type="GeneID" id="4962314"/>
<dbReference type="GO" id="GO:0009535">
    <property type="term" value="C:chloroplast thylakoid membrane"/>
    <property type="evidence" value="ECO:0007669"/>
    <property type="project" value="UniProtKB-SubCell"/>
</dbReference>
<dbReference type="GO" id="GO:0045271">
    <property type="term" value="C:respiratory chain complex I"/>
    <property type="evidence" value="ECO:0007669"/>
    <property type="project" value="TreeGrafter"/>
</dbReference>
<dbReference type="GO" id="GO:0051539">
    <property type="term" value="F:4 iron, 4 sulfur cluster binding"/>
    <property type="evidence" value="ECO:0007669"/>
    <property type="project" value="UniProtKB-KW"/>
</dbReference>
<dbReference type="GO" id="GO:0005506">
    <property type="term" value="F:iron ion binding"/>
    <property type="evidence" value="ECO:0007669"/>
    <property type="project" value="UniProtKB-UniRule"/>
</dbReference>
<dbReference type="GO" id="GO:0008137">
    <property type="term" value="F:NADH dehydrogenase (ubiquinone) activity"/>
    <property type="evidence" value="ECO:0007669"/>
    <property type="project" value="InterPro"/>
</dbReference>
<dbReference type="GO" id="GO:0048038">
    <property type="term" value="F:quinone binding"/>
    <property type="evidence" value="ECO:0007669"/>
    <property type="project" value="UniProtKB-KW"/>
</dbReference>
<dbReference type="GO" id="GO:0009060">
    <property type="term" value="P:aerobic respiration"/>
    <property type="evidence" value="ECO:0007669"/>
    <property type="project" value="TreeGrafter"/>
</dbReference>
<dbReference type="GO" id="GO:0015990">
    <property type="term" value="P:electron transport coupled proton transport"/>
    <property type="evidence" value="ECO:0007669"/>
    <property type="project" value="TreeGrafter"/>
</dbReference>
<dbReference type="GO" id="GO:0019684">
    <property type="term" value="P:photosynthesis, light reaction"/>
    <property type="evidence" value="ECO:0007669"/>
    <property type="project" value="UniProtKB-UniRule"/>
</dbReference>
<dbReference type="FunFam" id="3.40.50.12280:FF:000003">
    <property type="entry name" value="NAD(P)H-quinone oxidoreductase subunit K, chloroplastic"/>
    <property type="match status" value="1"/>
</dbReference>
<dbReference type="Gene3D" id="3.40.50.12280">
    <property type="match status" value="1"/>
</dbReference>
<dbReference type="HAMAP" id="MF_01356">
    <property type="entry name" value="NDH1_NuoB"/>
    <property type="match status" value="1"/>
</dbReference>
<dbReference type="InterPro" id="IPR006137">
    <property type="entry name" value="NADH_UbQ_OxRdtase-like_20kDa"/>
</dbReference>
<dbReference type="InterPro" id="IPR006138">
    <property type="entry name" value="NADH_UQ_OxRdtase_20Kd_su"/>
</dbReference>
<dbReference type="NCBIfam" id="TIGR01957">
    <property type="entry name" value="nuoB_fam"/>
    <property type="match status" value="1"/>
</dbReference>
<dbReference type="NCBIfam" id="NF005012">
    <property type="entry name" value="PRK06411.1"/>
    <property type="match status" value="1"/>
</dbReference>
<dbReference type="PANTHER" id="PTHR11995">
    <property type="entry name" value="NADH DEHYDROGENASE"/>
    <property type="match status" value="1"/>
</dbReference>
<dbReference type="PANTHER" id="PTHR11995:SF14">
    <property type="entry name" value="NADH DEHYDROGENASE [UBIQUINONE] IRON-SULFUR PROTEIN 7, MITOCHONDRIAL"/>
    <property type="match status" value="1"/>
</dbReference>
<dbReference type="Pfam" id="PF01058">
    <property type="entry name" value="Oxidored_q6"/>
    <property type="match status" value="1"/>
</dbReference>
<dbReference type="SUPFAM" id="SSF56770">
    <property type="entry name" value="HydA/Nqo6-like"/>
    <property type="match status" value="1"/>
</dbReference>
<dbReference type="PROSITE" id="PS01150">
    <property type="entry name" value="COMPLEX1_20K"/>
    <property type="match status" value="1"/>
</dbReference>
<proteinExistence type="inferred from homology"/>
<evidence type="ECO:0000255" key="1">
    <source>
        <dbReference type="HAMAP-Rule" id="MF_01356"/>
    </source>
</evidence>
<gene>
    <name evidence="1" type="primary">ndhK</name>
</gene>
<name>NDHK_AETGR</name>
<feature type="chain" id="PRO_0000358516" description="NAD(P)H-quinone oxidoreductase subunit K, chloroplastic">
    <location>
        <begin position="1"/>
        <end position="229"/>
    </location>
</feature>
<feature type="binding site" evidence="1">
    <location>
        <position position="43"/>
    </location>
    <ligand>
        <name>[4Fe-4S] cluster</name>
        <dbReference type="ChEBI" id="CHEBI:49883"/>
    </ligand>
</feature>
<feature type="binding site" evidence="1">
    <location>
        <position position="44"/>
    </location>
    <ligand>
        <name>[4Fe-4S] cluster</name>
        <dbReference type="ChEBI" id="CHEBI:49883"/>
    </ligand>
</feature>
<feature type="binding site" evidence="1">
    <location>
        <position position="108"/>
    </location>
    <ligand>
        <name>[4Fe-4S] cluster</name>
        <dbReference type="ChEBI" id="CHEBI:49883"/>
    </ligand>
</feature>
<feature type="binding site" evidence="1">
    <location>
        <position position="139"/>
    </location>
    <ligand>
        <name>[4Fe-4S] cluster</name>
        <dbReference type="ChEBI" id="CHEBI:49883"/>
    </ligand>
</feature>
<geneLocation type="chloroplast"/>
<sequence>MNSIKFPVLDRTTKNSVISTTLNDLSNWSRLSSLWPLLYGTSCCFIEFASLIGSRFDFDRYGLVPRSSPRQADLILTAGTVTMKMAPSLVRLYEQMPEPKYVIAMGACTITGGMFSTDSYSTVRGVDKLIPVDVYLPGCPPKPEAVIDAITKLRTKIAREIYKDQIRPQQGNRCFTTNHKFLIVRSTDTGNSDQELLYPPSSTSEISTETFFKYKSPVSSHELVNSGGV</sequence>
<protein>
    <recommendedName>
        <fullName evidence="1">NAD(P)H-quinone oxidoreductase subunit K, chloroplastic</fullName>
        <ecNumber evidence="1">7.1.1.-</ecNumber>
    </recommendedName>
    <alternativeName>
        <fullName evidence="1">NAD(P)H dehydrogenase subunit K</fullName>
    </alternativeName>
    <alternativeName>
        <fullName evidence="1">NADH-plastoquinone oxidoreductase subunit K</fullName>
    </alternativeName>
</protein>